<keyword id="KW-0131">Cell cycle</keyword>
<keyword id="KW-0132">Cell division</keyword>
<keyword id="KW-0159">Chromosome partition</keyword>
<keyword id="KW-0963">Cytoplasm</keyword>
<organism>
    <name type="scientific">Bacillus cereus (strain ZK / E33L)</name>
    <dbReference type="NCBI Taxonomy" id="288681"/>
    <lineage>
        <taxon>Bacteria</taxon>
        <taxon>Bacillati</taxon>
        <taxon>Bacillota</taxon>
        <taxon>Bacilli</taxon>
        <taxon>Bacillales</taxon>
        <taxon>Bacillaceae</taxon>
        <taxon>Bacillus</taxon>
        <taxon>Bacillus cereus group</taxon>
    </lineage>
</organism>
<accession>Q635M3</accession>
<comment type="function">
    <text evidence="1">Participates in chromosomal partition during cell division. May act via the formation of a condensin-like complex containing Smc and ScpA that pull DNA away from mid-cell into both cell halves.</text>
</comment>
<comment type="subunit">
    <text evidence="1">Homodimer. Homodimerization may be required to stabilize the binding of ScpA to the Smc head domains. Component of a cohesin-like complex composed of ScpA, ScpB and the Smc homodimer, in which ScpA and ScpB bind to the head domain of Smc. The presence of the three proteins is required for the association of the complex with DNA.</text>
</comment>
<comment type="subcellular location">
    <subcellularLocation>
        <location evidence="1">Cytoplasm</location>
    </subcellularLocation>
    <text evidence="1">Associated with two foci at the outer edges of the nucleoid region in young cells, and at four foci within both cell halves in older cells.</text>
</comment>
<comment type="similarity">
    <text evidence="1">Belongs to the ScpB family.</text>
</comment>
<evidence type="ECO:0000255" key="1">
    <source>
        <dbReference type="HAMAP-Rule" id="MF_01804"/>
    </source>
</evidence>
<gene>
    <name evidence="1" type="primary">scpB</name>
    <name type="ordered locus">BCE33L3813</name>
</gene>
<name>SCPB_BACCZ</name>
<dbReference type="EMBL" id="CP000001">
    <property type="protein sequence ID" value="AAU16454.1"/>
    <property type="molecule type" value="Genomic_DNA"/>
</dbReference>
<dbReference type="RefSeq" id="WP_000376224.1">
    <property type="nucleotide sequence ID" value="NZ_CP009968.1"/>
</dbReference>
<dbReference type="SMR" id="Q635M3"/>
<dbReference type="KEGG" id="bcz:BCE33L3813"/>
<dbReference type="PATRIC" id="fig|288681.22.peg.1590"/>
<dbReference type="Proteomes" id="UP000002612">
    <property type="component" value="Chromosome"/>
</dbReference>
<dbReference type="GO" id="GO:0005737">
    <property type="term" value="C:cytoplasm"/>
    <property type="evidence" value="ECO:0007669"/>
    <property type="project" value="UniProtKB-SubCell"/>
</dbReference>
<dbReference type="GO" id="GO:0051301">
    <property type="term" value="P:cell division"/>
    <property type="evidence" value="ECO:0007669"/>
    <property type="project" value="UniProtKB-KW"/>
</dbReference>
<dbReference type="GO" id="GO:0051304">
    <property type="term" value="P:chromosome separation"/>
    <property type="evidence" value="ECO:0007669"/>
    <property type="project" value="InterPro"/>
</dbReference>
<dbReference type="GO" id="GO:0006260">
    <property type="term" value="P:DNA replication"/>
    <property type="evidence" value="ECO:0007669"/>
    <property type="project" value="UniProtKB-UniRule"/>
</dbReference>
<dbReference type="Gene3D" id="1.10.10.10">
    <property type="entry name" value="Winged helix-like DNA-binding domain superfamily/Winged helix DNA-binding domain"/>
    <property type="match status" value="2"/>
</dbReference>
<dbReference type="HAMAP" id="MF_01804">
    <property type="entry name" value="ScpB"/>
    <property type="match status" value="1"/>
</dbReference>
<dbReference type="InterPro" id="IPR005234">
    <property type="entry name" value="ScpB_csome_segregation"/>
</dbReference>
<dbReference type="InterPro" id="IPR036388">
    <property type="entry name" value="WH-like_DNA-bd_sf"/>
</dbReference>
<dbReference type="InterPro" id="IPR036390">
    <property type="entry name" value="WH_DNA-bd_sf"/>
</dbReference>
<dbReference type="NCBIfam" id="TIGR00281">
    <property type="entry name" value="SMC-Scp complex subunit ScpB"/>
    <property type="match status" value="1"/>
</dbReference>
<dbReference type="PANTHER" id="PTHR34298">
    <property type="entry name" value="SEGREGATION AND CONDENSATION PROTEIN B"/>
    <property type="match status" value="1"/>
</dbReference>
<dbReference type="PANTHER" id="PTHR34298:SF2">
    <property type="entry name" value="SEGREGATION AND CONDENSATION PROTEIN B"/>
    <property type="match status" value="1"/>
</dbReference>
<dbReference type="Pfam" id="PF04079">
    <property type="entry name" value="SMC_ScpB"/>
    <property type="match status" value="1"/>
</dbReference>
<dbReference type="PIRSF" id="PIRSF019345">
    <property type="entry name" value="ScpB"/>
    <property type="match status" value="1"/>
</dbReference>
<dbReference type="SUPFAM" id="SSF46785">
    <property type="entry name" value="Winged helix' DNA-binding domain"/>
    <property type="match status" value="2"/>
</dbReference>
<feature type="chain" id="PRO_0000273293" description="Segregation and condensation protein B">
    <location>
        <begin position="1"/>
        <end position="190"/>
    </location>
</feature>
<protein>
    <recommendedName>
        <fullName evidence="1">Segregation and condensation protein B</fullName>
    </recommendedName>
</protein>
<proteinExistence type="inferred from homology"/>
<reference key="1">
    <citation type="journal article" date="2006" name="J. Bacteriol.">
        <title>Pathogenomic sequence analysis of Bacillus cereus and Bacillus thuringiensis isolates closely related to Bacillus anthracis.</title>
        <authorList>
            <person name="Han C.S."/>
            <person name="Xie G."/>
            <person name="Challacombe J.F."/>
            <person name="Altherr M.R."/>
            <person name="Bhotika S.S."/>
            <person name="Bruce D."/>
            <person name="Campbell C.S."/>
            <person name="Campbell M.L."/>
            <person name="Chen J."/>
            <person name="Chertkov O."/>
            <person name="Cleland C."/>
            <person name="Dimitrijevic M."/>
            <person name="Doggett N.A."/>
            <person name="Fawcett J.J."/>
            <person name="Glavina T."/>
            <person name="Goodwin L.A."/>
            <person name="Hill K.K."/>
            <person name="Hitchcock P."/>
            <person name="Jackson P.J."/>
            <person name="Keim P."/>
            <person name="Kewalramani A.R."/>
            <person name="Longmire J."/>
            <person name="Lucas S."/>
            <person name="Malfatti S."/>
            <person name="McMurry K."/>
            <person name="Meincke L.J."/>
            <person name="Misra M."/>
            <person name="Moseman B.L."/>
            <person name="Mundt M."/>
            <person name="Munk A.C."/>
            <person name="Okinaka R.T."/>
            <person name="Parson-Quintana B."/>
            <person name="Reilly L.P."/>
            <person name="Richardson P."/>
            <person name="Robinson D.L."/>
            <person name="Rubin E."/>
            <person name="Saunders E."/>
            <person name="Tapia R."/>
            <person name="Tesmer J.G."/>
            <person name="Thayer N."/>
            <person name="Thompson L.S."/>
            <person name="Tice H."/>
            <person name="Ticknor L.O."/>
            <person name="Wills P.L."/>
            <person name="Brettin T.S."/>
            <person name="Gilna P."/>
        </authorList>
    </citation>
    <scope>NUCLEOTIDE SEQUENCE [LARGE SCALE GENOMIC DNA]</scope>
    <source>
        <strain>ZK / E33L</strain>
    </source>
</reference>
<sequence>MDRTEQKSIIEGLLFVSGDEGIYPEQIAKVLEIEGNEVIDILEEMQKECEGAHRGLQIVQYAKVYRFATKKEHASYYQKLIDIPTAASLSQAALETLAIVAYRQPITRTEMEEIRGVKTDKALQTLVSHLLIKEMGRAEGPGRPILYGTTKEFLDTFGLKTLDDLPPLSEENEQMNEADLFFGSLQEISK</sequence>